<reference key="1">
    <citation type="journal article" date="2008" name="Genome Res.">
        <title>Genome sequence of the beta-rhizobium Cupriavidus taiwanensis and comparative genomics of rhizobia.</title>
        <authorList>
            <person name="Amadou C."/>
            <person name="Pascal G."/>
            <person name="Mangenot S."/>
            <person name="Glew M."/>
            <person name="Bontemps C."/>
            <person name="Capela D."/>
            <person name="Carrere S."/>
            <person name="Cruveiller S."/>
            <person name="Dossat C."/>
            <person name="Lajus A."/>
            <person name="Marchetti M."/>
            <person name="Poinsot V."/>
            <person name="Rouy Z."/>
            <person name="Servin B."/>
            <person name="Saad M."/>
            <person name="Schenowitz C."/>
            <person name="Barbe V."/>
            <person name="Batut J."/>
            <person name="Medigue C."/>
            <person name="Masson-Boivin C."/>
        </authorList>
    </citation>
    <scope>NUCLEOTIDE SEQUENCE [LARGE SCALE GENOMIC DNA]</scope>
    <source>
        <strain>DSM 17343 / BCRC 17206 / CCUG 44338 / CIP 107171 / LMG 19424 / R1</strain>
    </source>
</reference>
<keyword id="KW-0067">ATP-binding</keyword>
<keyword id="KW-0963">Cytoplasm</keyword>
<keyword id="KW-0436">Ligase</keyword>
<keyword id="KW-0547">Nucleotide-binding</keyword>
<keyword id="KW-0566">Pantothenate biosynthesis</keyword>
<accession>B3R684</accession>
<proteinExistence type="inferred from homology"/>
<gene>
    <name evidence="1" type="primary">panC</name>
    <name type="ordered locus">RALTA_A2433</name>
</gene>
<comment type="function">
    <text evidence="1">Catalyzes the condensation of pantoate with beta-alanine in an ATP-dependent reaction via a pantoyl-adenylate intermediate.</text>
</comment>
<comment type="catalytic activity">
    <reaction evidence="1">
        <text>(R)-pantoate + beta-alanine + ATP = (R)-pantothenate + AMP + diphosphate + H(+)</text>
        <dbReference type="Rhea" id="RHEA:10912"/>
        <dbReference type="ChEBI" id="CHEBI:15378"/>
        <dbReference type="ChEBI" id="CHEBI:15980"/>
        <dbReference type="ChEBI" id="CHEBI:29032"/>
        <dbReference type="ChEBI" id="CHEBI:30616"/>
        <dbReference type="ChEBI" id="CHEBI:33019"/>
        <dbReference type="ChEBI" id="CHEBI:57966"/>
        <dbReference type="ChEBI" id="CHEBI:456215"/>
        <dbReference type="EC" id="6.3.2.1"/>
    </reaction>
</comment>
<comment type="pathway">
    <text evidence="1">Cofactor biosynthesis; (R)-pantothenate biosynthesis; (R)-pantothenate from (R)-pantoate and beta-alanine: step 1/1.</text>
</comment>
<comment type="subunit">
    <text evidence="1">Homodimer.</text>
</comment>
<comment type="subcellular location">
    <subcellularLocation>
        <location evidence="1">Cytoplasm</location>
    </subcellularLocation>
</comment>
<comment type="miscellaneous">
    <text evidence="1">The reaction proceeds by a bi uni uni bi ping pong mechanism.</text>
</comment>
<comment type="similarity">
    <text evidence="1">Belongs to the pantothenate synthetase family.</text>
</comment>
<feature type="chain" id="PRO_1000097057" description="Pantothenate synthetase">
    <location>
        <begin position="1"/>
        <end position="282"/>
    </location>
</feature>
<feature type="active site" description="Proton donor" evidence="1">
    <location>
        <position position="33"/>
    </location>
</feature>
<feature type="binding site" evidence="1">
    <location>
        <begin position="26"/>
        <end position="33"/>
    </location>
    <ligand>
        <name>ATP</name>
        <dbReference type="ChEBI" id="CHEBI:30616"/>
    </ligand>
</feature>
<feature type="binding site" evidence="1">
    <location>
        <position position="57"/>
    </location>
    <ligand>
        <name>(R)-pantoate</name>
        <dbReference type="ChEBI" id="CHEBI:15980"/>
    </ligand>
</feature>
<feature type="binding site" evidence="1">
    <location>
        <position position="57"/>
    </location>
    <ligand>
        <name>beta-alanine</name>
        <dbReference type="ChEBI" id="CHEBI:57966"/>
    </ligand>
</feature>
<feature type="binding site" evidence="1">
    <location>
        <begin position="144"/>
        <end position="147"/>
    </location>
    <ligand>
        <name>ATP</name>
        <dbReference type="ChEBI" id="CHEBI:30616"/>
    </ligand>
</feature>
<feature type="binding site" evidence="1">
    <location>
        <position position="150"/>
    </location>
    <ligand>
        <name>(R)-pantoate</name>
        <dbReference type="ChEBI" id="CHEBI:15980"/>
    </ligand>
</feature>
<feature type="binding site" evidence="1">
    <location>
        <position position="173"/>
    </location>
    <ligand>
        <name>ATP</name>
        <dbReference type="ChEBI" id="CHEBI:30616"/>
    </ligand>
</feature>
<feature type="binding site" evidence="1">
    <location>
        <begin position="181"/>
        <end position="184"/>
    </location>
    <ligand>
        <name>ATP</name>
        <dbReference type="ChEBI" id="CHEBI:30616"/>
    </ligand>
</feature>
<name>PANC_CUPTR</name>
<dbReference type="EC" id="6.3.2.1" evidence="1"/>
<dbReference type="EMBL" id="CU633749">
    <property type="protein sequence ID" value="CAQ70367.1"/>
    <property type="molecule type" value="Genomic_DNA"/>
</dbReference>
<dbReference type="RefSeq" id="WP_012353667.1">
    <property type="nucleotide sequence ID" value="NC_010528.1"/>
</dbReference>
<dbReference type="SMR" id="B3R684"/>
<dbReference type="GeneID" id="29762930"/>
<dbReference type="KEGG" id="cti:RALTA_A2433"/>
<dbReference type="eggNOG" id="COG0414">
    <property type="taxonomic scope" value="Bacteria"/>
</dbReference>
<dbReference type="HOGENOM" id="CLU_047148_0_0_4"/>
<dbReference type="BioCyc" id="CTAI977880:RALTA_RS11830-MONOMER"/>
<dbReference type="UniPathway" id="UPA00028">
    <property type="reaction ID" value="UER00005"/>
</dbReference>
<dbReference type="Proteomes" id="UP000001692">
    <property type="component" value="Chromosome 1"/>
</dbReference>
<dbReference type="GO" id="GO:0005829">
    <property type="term" value="C:cytosol"/>
    <property type="evidence" value="ECO:0007669"/>
    <property type="project" value="TreeGrafter"/>
</dbReference>
<dbReference type="GO" id="GO:0005524">
    <property type="term" value="F:ATP binding"/>
    <property type="evidence" value="ECO:0007669"/>
    <property type="project" value="UniProtKB-KW"/>
</dbReference>
<dbReference type="GO" id="GO:0004592">
    <property type="term" value="F:pantoate-beta-alanine ligase activity"/>
    <property type="evidence" value="ECO:0007669"/>
    <property type="project" value="UniProtKB-UniRule"/>
</dbReference>
<dbReference type="GO" id="GO:0015940">
    <property type="term" value="P:pantothenate biosynthetic process"/>
    <property type="evidence" value="ECO:0007669"/>
    <property type="project" value="UniProtKB-UniRule"/>
</dbReference>
<dbReference type="CDD" id="cd00560">
    <property type="entry name" value="PanC"/>
    <property type="match status" value="1"/>
</dbReference>
<dbReference type="Gene3D" id="3.40.50.620">
    <property type="entry name" value="HUPs"/>
    <property type="match status" value="1"/>
</dbReference>
<dbReference type="Gene3D" id="3.30.1300.10">
    <property type="entry name" value="Pantoate-beta-alanine ligase, C-terminal domain"/>
    <property type="match status" value="1"/>
</dbReference>
<dbReference type="HAMAP" id="MF_00158">
    <property type="entry name" value="PanC"/>
    <property type="match status" value="1"/>
</dbReference>
<dbReference type="InterPro" id="IPR004821">
    <property type="entry name" value="Cyt_trans-like"/>
</dbReference>
<dbReference type="InterPro" id="IPR003721">
    <property type="entry name" value="Pantoate_ligase"/>
</dbReference>
<dbReference type="InterPro" id="IPR042176">
    <property type="entry name" value="Pantoate_ligase_C"/>
</dbReference>
<dbReference type="InterPro" id="IPR014729">
    <property type="entry name" value="Rossmann-like_a/b/a_fold"/>
</dbReference>
<dbReference type="NCBIfam" id="TIGR00125">
    <property type="entry name" value="cyt_tran_rel"/>
    <property type="match status" value="1"/>
</dbReference>
<dbReference type="NCBIfam" id="TIGR00018">
    <property type="entry name" value="panC"/>
    <property type="match status" value="1"/>
</dbReference>
<dbReference type="PANTHER" id="PTHR21299">
    <property type="entry name" value="CYTIDYLATE KINASE/PANTOATE-BETA-ALANINE LIGASE"/>
    <property type="match status" value="1"/>
</dbReference>
<dbReference type="PANTHER" id="PTHR21299:SF1">
    <property type="entry name" value="PANTOATE--BETA-ALANINE LIGASE"/>
    <property type="match status" value="1"/>
</dbReference>
<dbReference type="Pfam" id="PF02569">
    <property type="entry name" value="Pantoate_ligase"/>
    <property type="match status" value="1"/>
</dbReference>
<dbReference type="SUPFAM" id="SSF52374">
    <property type="entry name" value="Nucleotidylyl transferase"/>
    <property type="match status" value="1"/>
</dbReference>
<protein>
    <recommendedName>
        <fullName evidence="1">Pantothenate synthetase</fullName>
        <shortName evidence="1">PS</shortName>
        <ecNumber evidence="1">6.3.2.1</ecNumber>
    </recommendedName>
    <alternativeName>
        <fullName evidence="1">Pantoate--beta-alanine ligase</fullName>
    </alternativeName>
    <alternativeName>
        <fullName evidence="1">Pantoate-activating enzyme</fullName>
    </alternativeName>
</protein>
<organism>
    <name type="scientific">Cupriavidus taiwanensis (strain DSM 17343 / BCRC 17206 / CCUG 44338 / CIP 107171 / LMG 19424 / R1)</name>
    <name type="common">Ralstonia taiwanensis (strain LMG 19424)</name>
    <dbReference type="NCBI Taxonomy" id="977880"/>
    <lineage>
        <taxon>Bacteria</taxon>
        <taxon>Pseudomonadati</taxon>
        <taxon>Pseudomonadota</taxon>
        <taxon>Betaproteobacteria</taxon>
        <taxon>Burkholderiales</taxon>
        <taxon>Burkholderiaceae</taxon>
        <taxon>Cupriavidus</taxon>
    </lineage>
</organism>
<evidence type="ECO:0000255" key="1">
    <source>
        <dbReference type="HAMAP-Rule" id="MF_00158"/>
    </source>
</evidence>
<sequence>MKVISSIQELRDQLRGQNRAAFVPTMGNLHEGHLSLMRLARQHGDPVVASIFVNRLQFGPNEDFDKYPRTLQEDIEKLQSEGVYVLFAPSERDMYPEPQEYRVEPPHDLGDILEGEFRPGFFKGVCTVVMKLFSCAQPRVAVFGKKDYQQLMIVRRMVQQFALPIDIVPAETVRAEDGLALSSRNRYLSPDERAEAPVLYRTLHDVRDTVLGGDRASADLLAVEARARAALEQRGWKPDYVAIRKRVDLQAPTREEFLAGEPLVILTAAKLGATRLIDNLEI</sequence>